<reference key="1">
    <citation type="journal article" date="2000" name="J. Biol. Chem.">
        <title>Molecular cloning, genomic organization, and biochemical characterization of myristoyl-CoA:protein N-myristoyltransferase from Arabidopsis thaliana.</title>
        <authorList>
            <person name="Qi Q."/>
            <person name="Rajala R.V.S."/>
            <person name="Anderson W."/>
            <person name="Jiang C."/>
            <person name="Rozwadowski K."/>
            <person name="Selvaraj G."/>
            <person name="Sharma R."/>
            <person name="Datla R."/>
        </authorList>
    </citation>
    <scope>NUCLEOTIDE SEQUENCE [MRNA]</scope>
    <scope>FUNCTION</scope>
    <scope>SUBCELLULAR LOCATION</scope>
    <scope>TISSUE SPECIFICITY</scope>
    <scope>BIOPHYSICOCHEMICAL PROPERTIES</scope>
    <scope>CATALYTIC ACTIVITY</scope>
    <source>
        <strain>cv. Columbia</strain>
    </source>
</reference>
<reference key="2">
    <citation type="journal article" date="2003" name="J. Biol. Chem.">
        <title>Unexpected protein families including cell defense components feature in the N-myristoylome of a higher eukaryote.</title>
        <authorList>
            <person name="Boisson B."/>
            <person name="Giglione C."/>
            <person name="Meinnel T."/>
        </authorList>
    </citation>
    <scope>NUCLEOTIDE SEQUENCE [MRNA]</scope>
    <scope>FUNCTION</scope>
    <scope>CATALYTIC ACTIVITY</scope>
</reference>
<reference key="3">
    <citation type="journal article" date="2000" name="DNA Res.">
        <title>Structural analysis of Arabidopsis thaliana chromosome 5. X. Sequence features of the regions of 3,076,755 bp covered by sixty P1 and TAC clones.</title>
        <authorList>
            <person name="Sato S."/>
            <person name="Nakamura Y."/>
            <person name="Kaneko T."/>
            <person name="Katoh T."/>
            <person name="Asamizu E."/>
            <person name="Kotani H."/>
            <person name="Tabata S."/>
        </authorList>
    </citation>
    <scope>NUCLEOTIDE SEQUENCE [LARGE SCALE GENOMIC DNA]</scope>
    <source>
        <strain>cv. Columbia</strain>
    </source>
</reference>
<reference key="4">
    <citation type="journal article" date="2017" name="Plant J.">
        <title>Araport11: a complete reannotation of the Arabidopsis thaliana reference genome.</title>
        <authorList>
            <person name="Cheng C.Y."/>
            <person name="Krishnakumar V."/>
            <person name="Chan A.P."/>
            <person name="Thibaud-Nissen F."/>
            <person name="Schobel S."/>
            <person name="Town C.D."/>
        </authorList>
    </citation>
    <scope>GENOME REANNOTATION</scope>
    <source>
        <strain>cv. Columbia</strain>
    </source>
</reference>
<reference key="5">
    <citation type="journal article" date="2003" name="Science">
        <title>Empirical analysis of transcriptional activity in the Arabidopsis genome.</title>
        <authorList>
            <person name="Yamada K."/>
            <person name="Lim J."/>
            <person name="Dale J.M."/>
            <person name="Chen H."/>
            <person name="Shinn P."/>
            <person name="Palm C.J."/>
            <person name="Southwick A.M."/>
            <person name="Wu H.C."/>
            <person name="Kim C.J."/>
            <person name="Nguyen M."/>
            <person name="Pham P.K."/>
            <person name="Cheuk R.F."/>
            <person name="Karlin-Newmann G."/>
            <person name="Liu S.X."/>
            <person name="Lam B."/>
            <person name="Sakano H."/>
            <person name="Wu T."/>
            <person name="Yu G."/>
            <person name="Miranda M."/>
            <person name="Quach H.L."/>
            <person name="Tripp M."/>
            <person name="Chang C.H."/>
            <person name="Lee J.M."/>
            <person name="Toriumi M.J."/>
            <person name="Chan M.M."/>
            <person name="Tang C.C."/>
            <person name="Onodera C.S."/>
            <person name="Deng J.M."/>
            <person name="Akiyama K."/>
            <person name="Ansari Y."/>
            <person name="Arakawa T."/>
            <person name="Banh J."/>
            <person name="Banno F."/>
            <person name="Bowser L."/>
            <person name="Brooks S.Y."/>
            <person name="Carninci P."/>
            <person name="Chao Q."/>
            <person name="Choy N."/>
            <person name="Enju A."/>
            <person name="Goldsmith A.D."/>
            <person name="Gurjal M."/>
            <person name="Hansen N.F."/>
            <person name="Hayashizaki Y."/>
            <person name="Johnson-Hopson C."/>
            <person name="Hsuan V.W."/>
            <person name="Iida K."/>
            <person name="Karnes M."/>
            <person name="Khan S."/>
            <person name="Koesema E."/>
            <person name="Ishida J."/>
            <person name="Jiang P.X."/>
            <person name="Jones T."/>
            <person name="Kawai J."/>
            <person name="Kamiya A."/>
            <person name="Meyers C."/>
            <person name="Nakajima M."/>
            <person name="Narusaka M."/>
            <person name="Seki M."/>
            <person name="Sakurai T."/>
            <person name="Satou M."/>
            <person name="Tamse R."/>
            <person name="Vaysberg M."/>
            <person name="Wallender E.K."/>
            <person name="Wong C."/>
            <person name="Yamamura Y."/>
            <person name="Yuan S."/>
            <person name="Shinozaki K."/>
            <person name="Davis R.W."/>
            <person name="Theologis A."/>
            <person name="Ecker J.R."/>
        </authorList>
    </citation>
    <scope>NUCLEOTIDE SEQUENCE [LARGE SCALE MRNA]</scope>
    <source>
        <strain>cv. Columbia</strain>
    </source>
</reference>
<reference key="6">
    <citation type="submission" date="2002-03" db="EMBL/GenBank/DDBJ databases">
        <title>Full-length cDNA from Arabidopsis thaliana.</title>
        <authorList>
            <person name="Brover V.V."/>
            <person name="Troukhan M.E."/>
            <person name="Alexandrov N.A."/>
            <person name="Lu Y.-P."/>
            <person name="Flavell R.B."/>
            <person name="Feldmann K.A."/>
        </authorList>
    </citation>
    <scope>NUCLEOTIDE SEQUENCE [LARGE SCALE MRNA]</scope>
</reference>
<reference key="7">
    <citation type="journal article" date="2012" name="Mol. Cell. Proteomics">
        <title>Comparative large-scale characterisation of plant vs. mammal proteins reveals similar and idiosyncratic N-alpha acetylation features.</title>
        <authorList>
            <person name="Bienvenut W.V."/>
            <person name="Sumpton D."/>
            <person name="Martinez A."/>
            <person name="Lilla S."/>
            <person name="Espagne C."/>
            <person name="Meinnel T."/>
            <person name="Giglione C."/>
        </authorList>
    </citation>
    <scope>ACETYLATION [LARGE SCALE ANALYSIS] AT ALA-2</scope>
    <scope>CLEAVAGE OF INITIATOR METHIONINE [LARGE SCALE ANALYSIS]</scope>
    <scope>IDENTIFICATION BY MASS SPECTROMETRY [LARGE SCALE ANALYSIS]</scope>
</reference>
<organism>
    <name type="scientific">Arabidopsis thaliana</name>
    <name type="common">Mouse-ear cress</name>
    <dbReference type="NCBI Taxonomy" id="3702"/>
    <lineage>
        <taxon>Eukaryota</taxon>
        <taxon>Viridiplantae</taxon>
        <taxon>Streptophyta</taxon>
        <taxon>Embryophyta</taxon>
        <taxon>Tracheophyta</taxon>
        <taxon>Spermatophyta</taxon>
        <taxon>Magnoliopsida</taxon>
        <taxon>eudicotyledons</taxon>
        <taxon>Gunneridae</taxon>
        <taxon>Pentapetalae</taxon>
        <taxon>rosids</taxon>
        <taxon>malvids</taxon>
        <taxon>Brassicales</taxon>
        <taxon>Brassicaceae</taxon>
        <taxon>Camelineae</taxon>
        <taxon>Arabidopsis</taxon>
    </lineage>
</organism>
<gene>
    <name type="primary">NMT1</name>
    <name type="ordered locus">At5g57020</name>
    <name type="ORF">MHM17.15</name>
</gene>
<evidence type="ECO:0000250" key="1"/>
<evidence type="ECO:0000250" key="2">
    <source>
        <dbReference type="UniProtKB" id="P14743"/>
    </source>
</evidence>
<evidence type="ECO:0000256" key="3">
    <source>
        <dbReference type="SAM" id="MobiDB-lite"/>
    </source>
</evidence>
<evidence type="ECO:0000269" key="4">
    <source>
    </source>
</evidence>
<evidence type="ECO:0000269" key="5">
    <source>
    </source>
</evidence>
<evidence type="ECO:0000305" key="6"/>
<evidence type="ECO:0007744" key="7">
    <source>
    </source>
</evidence>
<dbReference type="EC" id="2.3.1.97" evidence="4 5"/>
<dbReference type="EMBL" id="AF193616">
    <property type="protein sequence ID" value="AAF60968.1"/>
    <property type="molecule type" value="mRNA"/>
</dbReference>
<dbReference type="EMBL" id="AF250956">
    <property type="protein sequence ID" value="AAK49037.1"/>
    <property type="molecule type" value="mRNA"/>
</dbReference>
<dbReference type="EMBL" id="AB024035">
    <property type="protein sequence ID" value="BAA97032.1"/>
    <property type="status" value="ALT_SEQ"/>
    <property type="molecule type" value="Genomic_DNA"/>
</dbReference>
<dbReference type="EMBL" id="CP002688">
    <property type="protein sequence ID" value="AED96835.1"/>
    <property type="molecule type" value="Genomic_DNA"/>
</dbReference>
<dbReference type="EMBL" id="AY045854">
    <property type="protein sequence ID" value="AAK76528.1"/>
    <property type="molecule type" value="mRNA"/>
</dbReference>
<dbReference type="EMBL" id="AY091380">
    <property type="protein sequence ID" value="AAM14319.1"/>
    <property type="molecule type" value="mRNA"/>
</dbReference>
<dbReference type="EMBL" id="AY087547">
    <property type="protein sequence ID" value="AAM65089.1"/>
    <property type="molecule type" value="mRNA"/>
</dbReference>
<dbReference type="RefSeq" id="NP_568846.1">
    <property type="nucleotide sequence ID" value="NM_125084.3"/>
</dbReference>
<dbReference type="SMR" id="Q9LTR9"/>
<dbReference type="BioGRID" id="21049">
    <property type="interactions" value="1"/>
</dbReference>
<dbReference type="FunCoup" id="Q9LTR9">
    <property type="interactions" value="4511"/>
</dbReference>
<dbReference type="STRING" id="3702.Q9LTR9"/>
<dbReference type="GlyGen" id="Q9LTR9">
    <property type="glycosylation" value="2 sites"/>
</dbReference>
<dbReference type="iPTMnet" id="Q9LTR9"/>
<dbReference type="PaxDb" id="3702-AT5G57020.1"/>
<dbReference type="ProteomicsDB" id="251069"/>
<dbReference type="EnsemblPlants" id="AT5G57020.1">
    <property type="protein sequence ID" value="AT5G57020.1"/>
    <property type="gene ID" value="AT5G57020"/>
</dbReference>
<dbReference type="GeneID" id="835805"/>
<dbReference type="Gramene" id="AT5G57020.1">
    <property type="protein sequence ID" value="AT5G57020.1"/>
    <property type="gene ID" value="AT5G57020"/>
</dbReference>
<dbReference type="KEGG" id="ath:AT5G57020"/>
<dbReference type="Araport" id="AT5G57020"/>
<dbReference type="TAIR" id="AT5G57020">
    <property type="gene designation" value="NMT1"/>
</dbReference>
<dbReference type="eggNOG" id="KOG2779">
    <property type="taxonomic scope" value="Eukaryota"/>
</dbReference>
<dbReference type="HOGENOM" id="CLU_022882_0_1_1"/>
<dbReference type="InParanoid" id="Q9LTR9"/>
<dbReference type="OMA" id="GWKRDWH"/>
<dbReference type="OrthoDB" id="60315at2759"/>
<dbReference type="PhylomeDB" id="Q9LTR9"/>
<dbReference type="BRENDA" id="2.3.1.97">
    <property type="organism ID" value="399"/>
</dbReference>
<dbReference type="CD-CODE" id="4299E36E">
    <property type="entry name" value="Nucleolus"/>
</dbReference>
<dbReference type="PRO" id="PR:Q9LTR9"/>
<dbReference type="Proteomes" id="UP000006548">
    <property type="component" value="Chromosome 5"/>
</dbReference>
<dbReference type="ExpressionAtlas" id="Q9LTR9">
    <property type="expression patterns" value="baseline and differential"/>
</dbReference>
<dbReference type="GO" id="GO:0005829">
    <property type="term" value="C:cytosol"/>
    <property type="evidence" value="ECO:0000314"/>
    <property type="project" value="TAIR"/>
</dbReference>
<dbReference type="GO" id="GO:0009536">
    <property type="term" value="C:plastid"/>
    <property type="evidence" value="ECO:0007005"/>
    <property type="project" value="TAIR"/>
</dbReference>
<dbReference type="GO" id="GO:0005840">
    <property type="term" value="C:ribosome"/>
    <property type="evidence" value="ECO:0000314"/>
    <property type="project" value="TAIR"/>
</dbReference>
<dbReference type="GO" id="GO:0004379">
    <property type="term" value="F:glycylpeptide N-tetradecanoyltransferase activity"/>
    <property type="evidence" value="ECO:0000314"/>
    <property type="project" value="TAIR"/>
</dbReference>
<dbReference type="GO" id="GO:0019107">
    <property type="term" value="F:myristoyltransferase activity"/>
    <property type="evidence" value="ECO:0000314"/>
    <property type="project" value="TAIR"/>
</dbReference>
<dbReference type="GO" id="GO:0010064">
    <property type="term" value="P:embryonic shoot morphogenesis"/>
    <property type="evidence" value="ECO:0000315"/>
    <property type="project" value="TAIR"/>
</dbReference>
<dbReference type="GO" id="GO:0006499">
    <property type="term" value="P:N-terminal protein myristoylation"/>
    <property type="evidence" value="ECO:0000314"/>
    <property type="project" value="TAIR"/>
</dbReference>
<dbReference type="FunFam" id="3.40.630.170:FF:000002">
    <property type="entry name" value="Glycylpeptide N-tetradecanoyltransferase"/>
    <property type="match status" value="1"/>
</dbReference>
<dbReference type="FunFam" id="3.40.630.30:FF:000042">
    <property type="entry name" value="Glycylpeptide N-tetradecanoyltransferase"/>
    <property type="match status" value="1"/>
</dbReference>
<dbReference type="Gene3D" id="3.40.630.170">
    <property type="match status" value="1"/>
</dbReference>
<dbReference type="InterPro" id="IPR016181">
    <property type="entry name" value="Acyl_CoA_acyltransferase"/>
</dbReference>
<dbReference type="InterPro" id="IPR000903">
    <property type="entry name" value="NMT"/>
</dbReference>
<dbReference type="InterPro" id="IPR022677">
    <property type="entry name" value="NMT_C"/>
</dbReference>
<dbReference type="InterPro" id="IPR022678">
    <property type="entry name" value="NMT_CS"/>
</dbReference>
<dbReference type="InterPro" id="IPR022676">
    <property type="entry name" value="NMT_N"/>
</dbReference>
<dbReference type="PANTHER" id="PTHR11377:SF17">
    <property type="entry name" value="GLYCYLPEPTIDE N-TETRADECANOYLTRANSFERASE 1-RELATED"/>
    <property type="match status" value="1"/>
</dbReference>
<dbReference type="PANTHER" id="PTHR11377">
    <property type="entry name" value="N-MYRISTOYL TRANSFERASE"/>
    <property type="match status" value="1"/>
</dbReference>
<dbReference type="Pfam" id="PF01233">
    <property type="entry name" value="NMT"/>
    <property type="match status" value="1"/>
</dbReference>
<dbReference type="Pfam" id="PF02799">
    <property type="entry name" value="NMT_C"/>
    <property type="match status" value="1"/>
</dbReference>
<dbReference type="PIRSF" id="PIRSF015892">
    <property type="entry name" value="N-myristl_transf"/>
    <property type="match status" value="1"/>
</dbReference>
<dbReference type="SUPFAM" id="SSF55729">
    <property type="entry name" value="Acyl-CoA N-acyltransferases (Nat)"/>
    <property type="match status" value="2"/>
</dbReference>
<dbReference type="PROSITE" id="PS00975">
    <property type="entry name" value="NMT_1"/>
    <property type="match status" value="1"/>
</dbReference>
<dbReference type="PROSITE" id="PS00976">
    <property type="entry name" value="NMT_2"/>
    <property type="match status" value="1"/>
</dbReference>
<comment type="function">
    <text evidence="4 5">Adds a myristoyl group to the N-terminal glycine residue of certain cellular proteins. Can also use decanoyl-CoA and lauroyl-CoA as substrates.</text>
</comment>
<comment type="catalytic activity">
    <reaction>
        <text>N-terminal glycyl-[protein] + tetradecanoyl-CoA = N-tetradecanoylglycyl-[protein] + CoA + H(+)</text>
        <dbReference type="Rhea" id="RHEA:15521"/>
        <dbReference type="Rhea" id="RHEA-COMP:12666"/>
        <dbReference type="Rhea" id="RHEA-COMP:12667"/>
        <dbReference type="ChEBI" id="CHEBI:15378"/>
        <dbReference type="ChEBI" id="CHEBI:57287"/>
        <dbReference type="ChEBI" id="CHEBI:57385"/>
        <dbReference type="ChEBI" id="CHEBI:64723"/>
        <dbReference type="ChEBI" id="CHEBI:133050"/>
        <dbReference type="EC" id="2.3.1.97"/>
    </reaction>
</comment>
<comment type="biophysicochemical properties">
    <kinetics>
        <KM evidence="4">3.7 uM for myristoyl-CoA, in the presence of CPK3</KM>
    </kinetics>
    <phDependence>
        <text evidence="4">Optimum pH is 7.8. Active from pH 5.5 to 8.5.</text>
    </phDependence>
</comment>
<comment type="subcellular location">
    <subcellularLocation>
        <location evidence="4">Cytoplasm</location>
    </subcellularLocation>
    <text>Mostly associated to ribosomes. Present to a lower extent in mitochondria.</text>
</comment>
<comment type="tissue specificity">
    <text evidence="4">Expressed ubiquitously, with higher levels in young tissues (at protein level).</text>
</comment>
<comment type="similarity">
    <text evidence="6">Belongs to the NMT family.</text>
</comment>
<comment type="sequence caution" evidence="6">
    <conflict type="erroneous gene model prediction">
        <sequence resource="EMBL-CDS" id="BAA97032"/>
    </conflict>
</comment>
<name>NMT1_ARATH</name>
<sequence length="434" mass="49799">MADNNSPPGSVEQKADQIVEANPLVKDDTSLETIVRRFQDSMSEAKTHKFWETQPVGQFKDIGDTSLPEGPIEPATPLSEVKQEPYNLPSVYEWTTCDMNSDDMCSEVYNLLKNNYVEDDENMFRFNYSKEFLRWALRPPGYYQSWHIGVRAKTSKKLVAFISGVPARIRVRDEVVKMAEINFLCVHKKLRSKRLAPVMIKEVTRRVHLENIWQAAYTAGVILPTPITTCQYWHRSLNPKKLIDVGFSRLGARMTMSRTIKLYKLPDAPITPGFRKMEPRDVPAVTRLLRNYLSQFGVATDFDENDVEHWLLPREDVVDSYLVESPETHDVTDFCSFYTLPSTILGNPNYTTLKAAYSYYNVATQTSFLQLMNDALIVSKQKGFDVFNALDVMHNESFLKELKFGPGDGQLHYYLYNYRLKSALKPAELGLVLL</sequence>
<accession>Q9LTR9</accession>
<accession>Q9M6E3</accession>
<feature type="initiator methionine" description="Removed" evidence="7">
    <location>
        <position position="1"/>
    </location>
</feature>
<feature type="chain" id="PRO_0000064231" description="Glycylpeptide N-tetradecanoyltransferase 1">
    <location>
        <begin position="2"/>
        <end position="434"/>
    </location>
</feature>
<feature type="region of interest" description="Disordered" evidence="3">
    <location>
        <begin position="1"/>
        <end position="24"/>
    </location>
</feature>
<feature type="active site" description="Proton acceptor; via carboxylate" evidence="1">
    <location>
        <position position="434"/>
    </location>
</feature>
<feature type="binding site" evidence="2">
    <location>
        <begin position="48"/>
        <end position="51"/>
    </location>
    <ligand>
        <name>tetradecanoyl-CoA</name>
        <dbReference type="ChEBI" id="CHEBI:57385"/>
    </ligand>
</feature>
<feature type="binding site" evidence="2">
    <location>
        <begin position="184"/>
        <end position="186"/>
    </location>
    <ligand>
        <name>tetradecanoyl-CoA</name>
        <dbReference type="ChEBI" id="CHEBI:57385"/>
    </ligand>
</feature>
<feature type="binding site" evidence="2">
    <location>
        <begin position="192"/>
        <end position="196"/>
    </location>
    <ligand>
        <name>tetradecanoyl-CoA</name>
        <dbReference type="ChEBI" id="CHEBI:57385"/>
    </ligand>
</feature>
<feature type="modified residue" description="N-acetylalanine" evidence="7">
    <location>
        <position position="2"/>
    </location>
</feature>
<proteinExistence type="evidence at protein level"/>
<keyword id="KW-0007">Acetylation</keyword>
<keyword id="KW-0012">Acyltransferase</keyword>
<keyword id="KW-0963">Cytoplasm</keyword>
<keyword id="KW-1185">Reference proteome</keyword>
<keyword id="KW-0808">Transferase</keyword>
<protein>
    <recommendedName>
        <fullName>Glycylpeptide N-tetradecanoyltransferase 1</fullName>
        <ecNumber evidence="4 5">2.3.1.97</ecNumber>
    </recommendedName>
    <alternativeName>
        <fullName>Myristoyl-CoA:protein N-myristoyltransferase 1</fullName>
        <shortName>NMT 1</shortName>
        <shortName>Type I N-myristoyltransferase 1</shortName>
    </alternativeName>
    <alternativeName>
        <fullName>Peptide N-myristoyltransferase 1</fullName>
    </alternativeName>
</protein>